<proteinExistence type="evidence at transcript level"/>
<comment type="function">
    <text evidence="1">Growth factor that binds to EGFR, ERBB4 and other EGF receptor family members. Potent mitogen for retinal pigment epithelial cells and vascular smooth muscle cells (By similarity).</text>
</comment>
<comment type="subunit">
    <text evidence="1">Monomer. Interacts with EGFR and ERBB4 (By similarity).</text>
</comment>
<comment type="subcellular location">
    <molecule>Betacellulin</molecule>
    <subcellularLocation>
        <location evidence="1">Secreted</location>
        <location evidence="1">Extracellular space</location>
    </subcellularLocation>
</comment>
<comment type="subcellular location">
    <molecule>Probetacellulin</molecule>
    <subcellularLocation>
        <location evidence="1">Cell membrane</location>
        <topology evidence="1">Single-pass type I membrane protein</topology>
    </subcellularLocation>
</comment>
<comment type="tissue specificity">
    <text>Expressed in a wide range of tissues, including the mammary gland.</text>
</comment>
<reference key="1">
    <citation type="journal article" date="1999" name="Biochem. J.">
        <title>Identification of betacellulin as a major peptide growth factor in milk: purification, characterization, and molecular cloning of bovine betacellulin.</title>
        <authorList>
            <person name="Dunbar A.J."/>
            <person name="Goddard C."/>
            <person name="Priebe I.K.P."/>
            <person name="Belford D.A."/>
        </authorList>
    </citation>
    <scope>NUCLEOTIDE SEQUENCE [MRNA]</scope>
    <source>
        <tissue>Kidney</tissue>
        <tissue>Milk</tissue>
    </source>
</reference>
<dbReference type="EMBL" id="AF140597">
    <property type="protein sequence ID" value="AAF15401.1"/>
    <property type="molecule type" value="mRNA"/>
</dbReference>
<dbReference type="SMR" id="Q9TTC5"/>
<dbReference type="FunCoup" id="Q9TTC5">
    <property type="interactions" value="77"/>
</dbReference>
<dbReference type="STRING" id="9913.ENSBTAP00000005549"/>
<dbReference type="GlyCosmos" id="Q9TTC5">
    <property type="glycosylation" value="1 site, No reported glycans"/>
</dbReference>
<dbReference type="GlyGen" id="Q9TTC5">
    <property type="glycosylation" value="1 site"/>
</dbReference>
<dbReference type="PaxDb" id="9913-ENSBTAP00000005549"/>
<dbReference type="eggNOG" id="ENOG502RZHQ">
    <property type="taxonomic scope" value="Eukaryota"/>
</dbReference>
<dbReference type="InParanoid" id="Q9TTC5"/>
<dbReference type="OrthoDB" id="6233064at2759"/>
<dbReference type="Proteomes" id="UP000009136">
    <property type="component" value="Unplaced"/>
</dbReference>
<dbReference type="GO" id="GO:0005615">
    <property type="term" value="C:extracellular space"/>
    <property type="evidence" value="ECO:0000318"/>
    <property type="project" value="GO_Central"/>
</dbReference>
<dbReference type="GO" id="GO:0005886">
    <property type="term" value="C:plasma membrane"/>
    <property type="evidence" value="ECO:0007669"/>
    <property type="project" value="UniProtKB-SubCell"/>
</dbReference>
<dbReference type="GO" id="GO:0005154">
    <property type="term" value="F:epidermal growth factor receptor binding"/>
    <property type="evidence" value="ECO:0000318"/>
    <property type="project" value="GO_Central"/>
</dbReference>
<dbReference type="GO" id="GO:0008083">
    <property type="term" value="F:growth factor activity"/>
    <property type="evidence" value="ECO:0000318"/>
    <property type="project" value="GO_Central"/>
</dbReference>
<dbReference type="GO" id="GO:0007173">
    <property type="term" value="P:epidermal growth factor receptor signaling pathway"/>
    <property type="evidence" value="ECO:0000318"/>
    <property type="project" value="GO_Central"/>
</dbReference>
<dbReference type="GO" id="GO:0051781">
    <property type="term" value="P:positive regulation of cell division"/>
    <property type="evidence" value="ECO:0007669"/>
    <property type="project" value="UniProtKB-KW"/>
</dbReference>
<dbReference type="GO" id="GO:0008284">
    <property type="term" value="P:positive regulation of cell population proliferation"/>
    <property type="evidence" value="ECO:0000318"/>
    <property type="project" value="GO_Central"/>
</dbReference>
<dbReference type="GO" id="GO:0045840">
    <property type="term" value="P:positive regulation of mitotic nuclear division"/>
    <property type="evidence" value="ECO:0000318"/>
    <property type="project" value="GO_Central"/>
</dbReference>
<dbReference type="FunFam" id="2.10.25.10:FF:000342">
    <property type="entry name" value="Betacellulin preproprotein"/>
    <property type="match status" value="1"/>
</dbReference>
<dbReference type="Gene3D" id="2.10.25.10">
    <property type="entry name" value="Laminin"/>
    <property type="match status" value="1"/>
</dbReference>
<dbReference type="InterPro" id="IPR000742">
    <property type="entry name" value="EGF-like_dom"/>
</dbReference>
<dbReference type="PANTHER" id="PTHR10740:SF3">
    <property type="entry name" value="PROBETACELLULIN"/>
    <property type="match status" value="1"/>
</dbReference>
<dbReference type="PANTHER" id="PTHR10740">
    <property type="entry name" value="TRANSFORMING GROWTH FACTOR ALPHA"/>
    <property type="match status" value="1"/>
</dbReference>
<dbReference type="PRINTS" id="PR00009">
    <property type="entry name" value="EGFTGF"/>
</dbReference>
<dbReference type="SUPFAM" id="SSF57196">
    <property type="entry name" value="EGF/Laminin"/>
    <property type="match status" value="1"/>
</dbReference>
<dbReference type="PROSITE" id="PS00022">
    <property type="entry name" value="EGF_1"/>
    <property type="match status" value="1"/>
</dbReference>
<dbReference type="PROSITE" id="PS01186">
    <property type="entry name" value="EGF_2"/>
    <property type="match status" value="1"/>
</dbReference>
<dbReference type="PROSITE" id="PS50026">
    <property type="entry name" value="EGF_3"/>
    <property type="match status" value="1"/>
</dbReference>
<organism>
    <name type="scientific">Bos taurus</name>
    <name type="common">Bovine</name>
    <dbReference type="NCBI Taxonomy" id="9913"/>
    <lineage>
        <taxon>Eukaryota</taxon>
        <taxon>Metazoa</taxon>
        <taxon>Chordata</taxon>
        <taxon>Craniata</taxon>
        <taxon>Vertebrata</taxon>
        <taxon>Euteleostomi</taxon>
        <taxon>Mammalia</taxon>
        <taxon>Eutheria</taxon>
        <taxon>Laurasiatheria</taxon>
        <taxon>Artiodactyla</taxon>
        <taxon>Ruminantia</taxon>
        <taxon>Pecora</taxon>
        <taxon>Bovidae</taxon>
        <taxon>Bovinae</taxon>
        <taxon>Bos</taxon>
    </lineage>
</organism>
<name>BTC_BOVIN</name>
<gene>
    <name type="primary">BTC</name>
</gene>
<accession>Q9TTC5</accession>
<feature type="signal peptide" evidence="1">
    <location>
        <begin position="1"/>
        <end position="31"/>
    </location>
</feature>
<feature type="chain" id="PRO_0000300684" description="Probetacellulin">
    <location>
        <begin position="32"/>
        <end position="178"/>
    </location>
</feature>
<feature type="chain" id="PRO_0000007488" description="Betacellulin">
    <location>
        <begin position="32"/>
        <end position="111"/>
    </location>
</feature>
<feature type="propeptide" id="PRO_0000007489" description="Removed in mature form" evidence="1">
    <location>
        <begin position="112"/>
        <end position="178"/>
    </location>
</feature>
<feature type="topological domain" description="Extracellular" evidence="2">
    <location>
        <begin position="32"/>
        <end position="118"/>
    </location>
</feature>
<feature type="transmembrane region" description="Helical" evidence="2">
    <location>
        <begin position="119"/>
        <end position="139"/>
    </location>
</feature>
<feature type="topological domain" description="Cytoplasmic" evidence="2">
    <location>
        <begin position="140"/>
        <end position="178"/>
    </location>
</feature>
<feature type="domain" description="EGF-like" evidence="3">
    <location>
        <begin position="65"/>
        <end position="105"/>
    </location>
</feature>
<feature type="glycosylation site" description="N-linked (GlcNAc...) asparagine" evidence="2">
    <location>
        <position position="34"/>
    </location>
</feature>
<feature type="disulfide bond" evidence="3">
    <location>
        <begin position="69"/>
        <end position="82"/>
    </location>
</feature>
<feature type="disulfide bond" evidence="3">
    <location>
        <begin position="77"/>
        <end position="93"/>
    </location>
</feature>
<feature type="disulfide bond" evidence="3">
    <location>
        <begin position="95"/>
        <end position="104"/>
    </location>
</feature>
<protein>
    <recommendedName>
        <fullName>Probetacellulin</fullName>
    </recommendedName>
    <component>
        <recommendedName>
            <fullName>Betacellulin</fullName>
            <shortName>BTC</shortName>
        </recommendedName>
    </component>
</protein>
<sequence length="178" mass="19640">MARAAPGSGASPLPLLPALALGLVILHCVVADGNSTRSPEDDGLLCGDHAENCPATTTQPKRRGHFSRCPKQYKHYCIKGRCRFVVAEQTPSCVCDEGYAGARCERVDLFYLRGDRGQILVICLIAVMVIFIILVVSICTCCHPLRKRRKRRKKEEEMETLGKDITPINDDIQETSIA</sequence>
<keyword id="KW-1003">Cell membrane</keyword>
<keyword id="KW-1015">Disulfide bond</keyword>
<keyword id="KW-0245">EGF-like domain</keyword>
<keyword id="KW-0325">Glycoprotein</keyword>
<keyword id="KW-0339">Growth factor</keyword>
<keyword id="KW-0472">Membrane</keyword>
<keyword id="KW-0497">Mitogen</keyword>
<keyword id="KW-1185">Reference proteome</keyword>
<keyword id="KW-0964">Secreted</keyword>
<keyword id="KW-0732">Signal</keyword>
<keyword id="KW-0812">Transmembrane</keyword>
<keyword id="KW-1133">Transmembrane helix</keyword>
<evidence type="ECO:0000250" key="1"/>
<evidence type="ECO:0000255" key="2"/>
<evidence type="ECO:0000255" key="3">
    <source>
        <dbReference type="PROSITE-ProRule" id="PRU00076"/>
    </source>
</evidence>